<keyword id="KW-0029">Amino-acid transport</keyword>
<keyword id="KW-0997">Cell inner membrane</keyword>
<keyword id="KW-1003">Cell membrane</keyword>
<keyword id="KW-0472">Membrane</keyword>
<keyword id="KW-1185">Reference proteome</keyword>
<keyword id="KW-0812">Transmembrane</keyword>
<keyword id="KW-1133">Transmembrane helix</keyword>
<keyword id="KW-0813">Transport</keyword>
<name>ALAE_ECO57</name>
<gene>
    <name evidence="1" type="primary">alaE</name>
    <name type="ordered locus">Z3970</name>
    <name type="ordered locus">ECs3531</name>
</gene>
<sequence>MFSPQSRLRHAVADTFAMVVYCSVVNMCIEVFLSGMSFEQSFYSRLVAIPVNILIAWPYGMYRDLFMRAARKVSPSGWIKNLADILAYVTFQSPVYVAILLVVGADWHQIMAAVSSNIVVSMLMGAVYGYFLDYCRRLFKVSRYQQVKA</sequence>
<protein>
    <recommendedName>
        <fullName evidence="1">L-alanine exporter AlaE</fullName>
    </recommendedName>
</protein>
<organism>
    <name type="scientific">Escherichia coli O157:H7</name>
    <dbReference type="NCBI Taxonomy" id="83334"/>
    <lineage>
        <taxon>Bacteria</taxon>
        <taxon>Pseudomonadati</taxon>
        <taxon>Pseudomonadota</taxon>
        <taxon>Gammaproteobacteria</taxon>
        <taxon>Enterobacterales</taxon>
        <taxon>Enterobacteriaceae</taxon>
        <taxon>Escherichia</taxon>
    </lineage>
</organism>
<dbReference type="EMBL" id="AE005174">
    <property type="protein sequence ID" value="AAG57778.1"/>
    <property type="molecule type" value="Genomic_DNA"/>
</dbReference>
<dbReference type="EMBL" id="BA000007">
    <property type="protein sequence ID" value="BAB36954.1"/>
    <property type="molecule type" value="Genomic_DNA"/>
</dbReference>
<dbReference type="PIR" id="C91070">
    <property type="entry name" value="C91070"/>
</dbReference>
<dbReference type="PIR" id="F85914">
    <property type="entry name" value="F85914"/>
</dbReference>
<dbReference type="RefSeq" id="NP_311558.1">
    <property type="nucleotide sequence ID" value="NC_002695.1"/>
</dbReference>
<dbReference type="RefSeq" id="WP_000492656.1">
    <property type="nucleotide sequence ID" value="NZ_VOAI01000003.1"/>
</dbReference>
<dbReference type="STRING" id="155864.Z3970"/>
<dbReference type="GeneID" id="75205913"/>
<dbReference type="GeneID" id="914753"/>
<dbReference type="KEGG" id="ece:Z3970"/>
<dbReference type="KEGG" id="ecs:ECs_3531"/>
<dbReference type="PATRIC" id="fig|386585.9.peg.3685"/>
<dbReference type="eggNOG" id="ENOG502ZRFS">
    <property type="taxonomic scope" value="Bacteria"/>
</dbReference>
<dbReference type="HOGENOM" id="CLU_126493_0_0_6"/>
<dbReference type="OMA" id="ADWHQIA"/>
<dbReference type="Proteomes" id="UP000000558">
    <property type="component" value="Chromosome"/>
</dbReference>
<dbReference type="Proteomes" id="UP000002519">
    <property type="component" value="Chromosome"/>
</dbReference>
<dbReference type="GO" id="GO:0005886">
    <property type="term" value="C:plasma membrane"/>
    <property type="evidence" value="ECO:0007669"/>
    <property type="project" value="UniProtKB-SubCell"/>
</dbReference>
<dbReference type="GO" id="GO:0034639">
    <property type="term" value="F:L-amino acid efflux transmembrane transporter activity"/>
    <property type="evidence" value="ECO:0007669"/>
    <property type="project" value="UniProtKB-UniRule"/>
</dbReference>
<dbReference type="GO" id="GO:0032973">
    <property type="term" value="P:amino acid export across plasma membrane"/>
    <property type="evidence" value="ECO:0007669"/>
    <property type="project" value="UniProtKB-UniRule"/>
</dbReference>
<dbReference type="HAMAP" id="MF_00914">
    <property type="entry name" value="L_Ala_exporter"/>
    <property type="match status" value="1"/>
</dbReference>
<dbReference type="InterPro" id="IPR010574">
    <property type="entry name" value="Ala_export_AlaE"/>
</dbReference>
<dbReference type="Pfam" id="PF06610">
    <property type="entry name" value="AlaE"/>
    <property type="match status" value="1"/>
</dbReference>
<comment type="function">
    <text evidence="1">Exports L-alanine.</text>
</comment>
<comment type="subcellular location">
    <subcellularLocation>
        <location evidence="1">Cell inner membrane</location>
        <topology evidence="1">Multi-pass membrane protein</topology>
    </subcellularLocation>
</comment>
<comment type="similarity">
    <text evidence="1">Belongs to the AlaE exporter family.</text>
</comment>
<feature type="chain" id="PRO_0000169303" description="L-alanine exporter AlaE">
    <location>
        <begin position="1"/>
        <end position="149"/>
    </location>
</feature>
<feature type="transmembrane region" description="Helical" evidence="1">
    <location>
        <begin position="16"/>
        <end position="36"/>
    </location>
</feature>
<feature type="transmembrane region" description="Helical" evidence="1">
    <location>
        <begin position="46"/>
        <end position="66"/>
    </location>
</feature>
<feature type="transmembrane region" description="Helical" evidence="1">
    <location>
        <begin position="85"/>
        <end position="105"/>
    </location>
</feature>
<feature type="transmembrane region" description="Helical" evidence="1">
    <location>
        <begin position="112"/>
        <end position="132"/>
    </location>
</feature>
<accession>P64552</accession>
<accession>P76626</accession>
<proteinExistence type="inferred from homology"/>
<reference key="1">
    <citation type="journal article" date="2001" name="Nature">
        <title>Genome sequence of enterohaemorrhagic Escherichia coli O157:H7.</title>
        <authorList>
            <person name="Perna N.T."/>
            <person name="Plunkett G. III"/>
            <person name="Burland V."/>
            <person name="Mau B."/>
            <person name="Glasner J.D."/>
            <person name="Rose D.J."/>
            <person name="Mayhew G.F."/>
            <person name="Evans P.S."/>
            <person name="Gregor J."/>
            <person name="Kirkpatrick H.A."/>
            <person name="Posfai G."/>
            <person name="Hackett J."/>
            <person name="Klink S."/>
            <person name="Boutin A."/>
            <person name="Shao Y."/>
            <person name="Miller L."/>
            <person name="Grotbeck E.J."/>
            <person name="Davis N.W."/>
            <person name="Lim A."/>
            <person name="Dimalanta E.T."/>
            <person name="Potamousis K."/>
            <person name="Apodaca J."/>
            <person name="Anantharaman T.S."/>
            <person name="Lin J."/>
            <person name="Yen G."/>
            <person name="Schwartz D.C."/>
            <person name="Welch R.A."/>
            <person name="Blattner F.R."/>
        </authorList>
    </citation>
    <scope>NUCLEOTIDE SEQUENCE [LARGE SCALE GENOMIC DNA]</scope>
    <source>
        <strain>O157:H7 / EDL933 / ATCC 700927 / EHEC</strain>
    </source>
</reference>
<reference key="2">
    <citation type="journal article" date="2001" name="DNA Res.">
        <title>Complete genome sequence of enterohemorrhagic Escherichia coli O157:H7 and genomic comparison with a laboratory strain K-12.</title>
        <authorList>
            <person name="Hayashi T."/>
            <person name="Makino K."/>
            <person name="Ohnishi M."/>
            <person name="Kurokawa K."/>
            <person name="Ishii K."/>
            <person name="Yokoyama K."/>
            <person name="Han C.-G."/>
            <person name="Ohtsubo E."/>
            <person name="Nakayama K."/>
            <person name="Murata T."/>
            <person name="Tanaka M."/>
            <person name="Tobe T."/>
            <person name="Iida T."/>
            <person name="Takami H."/>
            <person name="Honda T."/>
            <person name="Sasakawa C."/>
            <person name="Ogasawara N."/>
            <person name="Yasunaga T."/>
            <person name="Kuhara S."/>
            <person name="Shiba T."/>
            <person name="Hattori M."/>
            <person name="Shinagawa H."/>
        </authorList>
    </citation>
    <scope>NUCLEOTIDE SEQUENCE [LARGE SCALE GENOMIC DNA]</scope>
    <source>
        <strain>O157:H7 / Sakai / RIMD 0509952 / EHEC</strain>
    </source>
</reference>
<evidence type="ECO:0000255" key="1">
    <source>
        <dbReference type="HAMAP-Rule" id="MF_00914"/>
    </source>
</evidence>